<proteinExistence type="evidence at protein level"/>
<evidence type="ECO:0000250" key="1">
    <source>
        <dbReference type="UniProtKB" id="Q8BME9"/>
    </source>
</evidence>
<evidence type="ECO:0000250" key="2">
    <source>
        <dbReference type="UniProtKB" id="Q9R171"/>
    </source>
</evidence>
<evidence type="ECO:0000255" key="3">
    <source>
        <dbReference type="PROSITE-ProRule" id="PRU00368"/>
    </source>
</evidence>
<evidence type="ECO:0000255" key="4">
    <source>
        <dbReference type="PROSITE-ProRule" id="PRU00498"/>
    </source>
</evidence>
<evidence type="ECO:0000269" key="5">
    <source>
    </source>
</evidence>
<evidence type="ECO:0000305" key="6"/>
<protein>
    <recommendedName>
        <fullName>Cerebellin-4</fullName>
    </recommendedName>
    <alternativeName>
        <fullName>Cerebellin-like glycoprotein 1</fullName>
    </alternativeName>
</protein>
<name>CBLN4_HUMAN</name>
<sequence length="201" mass="21808">MGSGRRALSAVPAVLLVLTLPGLPVWAQNDTEPIVLEGKCLVVCDSNPATDSKGSSSSPLGISVRAANSKVAFSAVRSTNHEPSEMSNKTRIIYFDQILVNVGNFFTLESVFVAPRKGIYSFSFHVIKVYQSQTIQVNLMLNGKPVISAFAGDKDVTREAATNGVLLYLDKEDKVYLKLEKGNLVGGWQYSTFSGFLVFPL</sequence>
<reference key="1">
    <citation type="journal article" date="2003" name="Genome Res.">
        <title>The secreted protein discovery initiative (SPDI), a large-scale effort to identify novel human secreted and transmembrane proteins: a bioinformatics assessment.</title>
        <authorList>
            <person name="Clark H.F."/>
            <person name="Gurney A.L."/>
            <person name="Abaya E."/>
            <person name="Baker K."/>
            <person name="Baldwin D.T."/>
            <person name="Brush J."/>
            <person name="Chen J."/>
            <person name="Chow B."/>
            <person name="Chui C."/>
            <person name="Crowley C."/>
            <person name="Currell B."/>
            <person name="Deuel B."/>
            <person name="Dowd P."/>
            <person name="Eaton D."/>
            <person name="Foster J.S."/>
            <person name="Grimaldi C."/>
            <person name="Gu Q."/>
            <person name="Hass P.E."/>
            <person name="Heldens S."/>
            <person name="Huang A."/>
            <person name="Kim H.S."/>
            <person name="Klimowski L."/>
            <person name="Jin Y."/>
            <person name="Johnson S."/>
            <person name="Lee J."/>
            <person name="Lewis L."/>
            <person name="Liao D."/>
            <person name="Mark M.R."/>
            <person name="Robbie E."/>
            <person name="Sanchez C."/>
            <person name="Schoenfeld J."/>
            <person name="Seshagiri S."/>
            <person name="Simmons L."/>
            <person name="Singh J."/>
            <person name="Smith V."/>
            <person name="Stinson J."/>
            <person name="Vagts A."/>
            <person name="Vandlen R.L."/>
            <person name="Watanabe C."/>
            <person name="Wieand D."/>
            <person name="Woods K."/>
            <person name="Xie M.-H."/>
            <person name="Yansura D.G."/>
            <person name="Yi S."/>
            <person name="Yu G."/>
            <person name="Yuan J."/>
            <person name="Zhang M."/>
            <person name="Zhang Z."/>
            <person name="Goddard A.D."/>
            <person name="Wood W.I."/>
            <person name="Godowski P.J."/>
            <person name="Gray A.M."/>
        </authorList>
    </citation>
    <scope>NUCLEOTIDE SEQUENCE [LARGE SCALE MRNA]</scope>
</reference>
<reference key="2">
    <citation type="journal article" date="2004" name="Nat. Genet.">
        <title>Complete sequencing and characterization of 21,243 full-length human cDNAs.</title>
        <authorList>
            <person name="Ota T."/>
            <person name="Suzuki Y."/>
            <person name="Nishikawa T."/>
            <person name="Otsuki T."/>
            <person name="Sugiyama T."/>
            <person name="Irie R."/>
            <person name="Wakamatsu A."/>
            <person name="Hayashi K."/>
            <person name="Sato H."/>
            <person name="Nagai K."/>
            <person name="Kimura K."/>
            <person name="Makita H."/>
            <person name="Sekine M."/>
            <person name="Obayashi M."/>
            <person name="Nishi T."/>
            <person name="Shibahara T."/>
            <person name="Tanaka T."/>
            <person name="Ishii S."/>
            <person name="Yamamoto J."/>
            <person name="Saito K."/>
            <person name="Kawai Y."/>
            <person name="Isono Y."/>
            <person name="Nakamura Y."/>
            <person name="Nagahari K."/>
            <person name="Murakami K."/>
            <person name="Yasuda T."/>
            <person name="Iwayanagi T."/>
            <person name="Wagatsuma M."/>
            <person name="Shiratori A."/>
            <person name="Sudo H."/>
            <person name="Hosoiri T."/>
            <person name="Kaku Y."/>
            <person name="Kodaira H."/>
            <person name="Kondo H."/>
            <person name="Sugawara M."/>
            <person name="Takahashi M."/>
            <person name="Kanda K."/>
            <person name="Yokoi T."/>
            <person name="Furuya T."/>
            <person name="Kikkawa E."/>
            <person name="Omura Y."/>
            <person name="Abe K."/>
            <person name="Kamihara K."/>
            <person name="Katsuta N."/>
            <person name="Sato K."/>
            <person name="Tanikawa M."/>
            <person name="Yamazaki M."/>
            <person name="Ninomiya K."/>
            <person name="Ishibashi T."/>
            <person name="Yamashita H."/>
            <person name="Murakawa K."/>
            <person name="Fujimori K."/>
            <person name="Tanai H."/>
            <person name="Kimata M."/>
            <person name="Watanabe M."/>
            <person name="Hiraoka S."/>
            <person name="Chiba Y."/>
            <person name="Ishida S."/>
            <person name="Ono Y."/>
            <person name="Takiguchi S."/>
            <person name="Watanabe S."/>
            <person name="Yosida M."/>
            <person name="Hotuta T."/>
            <person name="Kusano J."/>
            <person name="Kanehori K."/>
            <person name="Takahashi-Fujii A."/>
            <person name="Hara H."/>
            <person name="Tanase T.-O."/>
            <person name="Nomura Y."/>
            <person name="Togiya S."/>
            <person name="Komai F."/>
            <person name="Hara R."/>
            <person name="Takeuchi K."/>
            <person name="Arita M."/>
            <person name="Imose N."/>
            <person name="Musashino K."/>
            <person name="Yuuki H."/>
            <person name="Oshima A."/>
            <person name="Sasaki N."/>
            <person name="Aotsuka S."/>
            <person name="Yoshikawa Y."/>
            <person name="Matsunawa H."/>
            <person name="Ichihara T."/>
            <person name="Shiohata N."/>
            <person name="Sano S."/>
            <person name="Moriya S."/>
            <person name="Momiyama H."/>
            <person name="Satoh N."/>
            <person name="Takami S."/>
            <person name="Terashima Y."/>
            <person name="Suzuki O."/>
            <person name="Nakagawa S."/>
            <person name="Senoh A."/>
            <person name="Mizoguchi H."/>
            <person name="Goto Y."/>
            <person name="Shimizu F."/>
            <person name="Wakebe H."/>
            <person name="Hishigaki H."/>
            <person name="Watanabe T."/>
            <person name="Sugiyama A."/>
            <person name="Takemoto M."/>
            <person name="Kawakami B."/>
            <person name="Yamazaki M."/>
            <person name="Watanabe K."/>
            <person name="Kumagai A."/>
            <person name="Itakura S."/>
            <person name="Fukuzumi Y."/>
            <person name="Fujimori Y."/>
            <person name="Komiyama M."/>
            <person name="Tashiro H."/>
            <person name="Tanigami A."/>
            <person name="Fujiwara T."/>
            <person name="Ono T."/>
            <person name="Yamada K."/>
            <person name="Fujii Y."/>
            <person name="Ozaki K."/>
            <person name="Hirao M."/>
            <person name="Ohmori Y."/>
            <person name="Kawabata A."/>
            <person name="Hikiji T."/>
            <person name="Kobatake N."/>
            <person name="Inagaki H."/>
            <person name="Ikema Y."/>
            <person name="Okamoto S."/>
            <person name="Okitani R."/>
            <person name="Kawakami T."/>
            <person name="Noguchi S."/>
            <person name="Itoh T."/>
            <person name="Shigeta K."/>
            <person name="Senba T."/>
            <person name="Matsumura K."/>
            <person name="Nakajima Y."/>
            <person name="Mizuno T."/>
            <person name="Morinaga M."/>
            <person name="Sasaki M."/>
            <person name="Togashi T."/>
            <person name="Oyama M."/>
            <person name="Hata H."/>
            <person name="Watanabe M."/>
            <person name="Komatsu T."/>
            <person name="Mizushima-Sugano J."/>
            <person name="Satoh T."/>
            <person name="Shirai Y."/>
            <person name="Takahashi Y."/>
            <person name="Nakagawa K."/>
            <person name="Okumura K."/>
            <person name="Nagase T."/>
            <person name="Nomura N."/>
            <person name="Kikuchi H."/>
            <person name="Masuho Y."/>
            <person name="Yamashita R."/>
            <person name="Nakai K."/>
            <person name="Yada T."/>
            <person name="Nakamura Y."/>
            <person name="Ohara O."/>
            <person name="Isogai T."/>
            <person name="Sugano S."/>
        </authorList>
    </citation>
    <scope>NUCLEOTIDE SEQUENCE [LARGE SCALE MRNA]</scope>
</reference>
<reference key="3">
    <citation type="journal article" date="2001" name="Nature">
        <title>The DNA sequence and comparative analysis of human chromosome 20.</title>
        <authorList>
            <person name="Deloukas P."/>
            <person name="Matthews L.H."/>
            <person name="Ashurst J.L."/>
            <person name="Burton J."/>
            <person name="Gilbert J.G.R."/>
            <person name="Jones M."/>
            <person name="Stavrides G."/>
            <person name="Almeida J.P."/>
            <person name="Babbage A.K."/>
            <person name="Bagguley C.L."/>
            <person name="Bailey J."/>
            <person name="Barlow K.F."/>
            <person name="Bates K.N."/>
            <person name="Beard L.M."/>
            <person name="Beare D.M."/>
            <person name="Beasley O.P."/>
            <person name="Bird C.P."/>
            <person name="Blakey S.E."/>
            <person name="Bridgeman A.M."/>
            <person name="Brown A.J."/>
            <person name="Buck D."/>
            <person name="Burrill W.D."/>
            <person name="Butler A.P."/>
            <person name="Carder C."/>
            <person name="Carter N.P."/>
            <person name="Chapman J.C."/>
            <person name="Clamp M."/>
            <person name="Clark G."/>
            <person name="Clark L.N."/>
            <person name="Clark S.Y."/>
            <person name="Clee C.M."/>
            <person name="Clegg S."/>
            <person name="Cobley V.E."/>
            <person name="Collier R.E."/>
            <person name="Connor R.E."/>
            <person name="Corby N.R."/>
            <person name="Coulson A."/>
            <person name="Coville G.J."/>
            <person name="Deadman R."/>
            <person name="Dhami P.D."/>
            <person name="Dunn M."/>
            <person name="Ellington A.G."/>
            <person name="Frankland J.A."/>
            <person name="Fraser A."/>
            <person name="French L."/>
            <person name="Garner P."/>
            <person name="Grafham D.V."/>
            <person name="Griffiths C."/>
            <person name="Griffiths M.N.D."/>
            <person name="Gwilliam R."/>
            <person name="Hall R.E."/>
            <person name="Hammond S."/>
            <person name="Harley J.L."/>
            <person name="Heath P.D."/>
            <person name="Ho S."/>
            <person name="Holden J.L."/>
            <person name="Howden P.J."/>
            <person name="Huckle E."/>
            <person name="Hunt A.R."/>
            <person name="Hunt S.E."/>
            <person name="Jekosch K."/>
            <person name="Johnson C.M."/>
            <person name="Johnson D."/>
            <person name="Kay M.P."/>
            <person name="Kimberley A.M."/>
            <person name="King A."/>
            <person name="Knights A."/>
            <person name="Laird G.K."/>
            <person name="Lawlor S."/>
            <person name="Lehvaeslaiho M.H."/>
            <person name="Leversha M.A."/>
            <person name="Lloyd C."/>
            <person name="Lloyd D.M."/>
            <person name="Lovell J.D."/>
            <person name="Marsh V.L."/>
            <person name="Martin S.L."/>
            <person name="McConnachie L.J."/>
            <person name="McLay K."/>
            <person name="McMurray A.A."/>
            <person name="Milne S.A."/>
            <person name="Mistry D."/>
            <person name="Moore M.J.F."/>
            <person name="Mullikin J.C."/>
            <person name="Nickerson T."/>
            <person name="Oliver K."/>
            <person name="Parker A."/>
            <person name="Patel R."/>
            <person name="Pearce T.A.V."/>
            <person name="Peck A.I."/>
            <person name="Phillimore B.J.C.T."/>
            <person name="Prathalingam S.R."/>
            <person name="Plumb R.W."/>
            <person name="Ramsay H."/>
            <person name="Rice C.M."/>
            <person name="Ross M.T."/>
            <person name="Scott C.E."/>
            <person name="Sehra H.K."/>
            <person name="Shownkeen R."/>
            <person name="Sims S."/>
            <person name="Skuce C.D."/>
            <person name="Smith M.L."/>
            <person name="Soderlund C."/>
            <person name="Steward C.A."/>
            <person name="Sulston J.E."/>
            <person name="Swann R.M."/>
            <person name="Sycamore N."/>
            <person name="Taylor R."/>
            <person name="Tee L."/>
            <person name="Thomas D.W."/>
            <person name="Thorpe A."/>
            <person name="Tracey A."/>
            <person name="Tromans A.C."/>
            <person name="Vaudin M."/>
            <person name="Wall M."/>
            <person name="Wallis J.M."/>
            <person name="Whitehead S.L."/>
            <person name="Whittaker P."/>
            <person name="Willey D.L."/>
            <person name="Williams L."/>
            <person name="Williams S.A."/>
            <person name="Wilming L."/>
            <person name="Wray P.W."/>
            <person name="Hubbard T."/>
            <person name="Durbin R.M."/>
            <person name="Bentley D.R."/>
            <person name="Beck S."/>
            <person name="Rogers J."/>
        </authorList>
    </citation>
    <scope>NUCLEOTIDE SEQUENCE [LARGE SCALE GENOMIC DNA]</scope>
</reference>
<reference key="4">
    <citation type="journal article" date="2004" name="Genome Res.">
        <title>The status, quality, and expansion of the NIH full-length cDNA project: the Mammalian Gene Collection (MGC).</title>
        <authorList>
            <consortium name="The MGC Project Team"/>
        </authorList>
    </citation>
    <scope>NUCLEOTIDE SEQUENCE [LARGE SCALE MRNA]</scope>
    <source>
        <tissue>Brain</tissue>
    </source>
</reference>
<reference key="5">
    <citation type="journal article" date="2004" name="Protein Sci.">
        <title>Signal peptide prediction based on analysis of experimentally verified cleavage sites.</title>
        <authorList>
            <person name="Zhang Z."/>
            <person name="Henzel W.J."/>
        </authorList>
    </citation>
    <scope>PROTEIN SEQUENCE OF 28-42</scope>
</reference>
<feature type="signal peptide" evidence="5">
    <location>
        <begin position="1"/>
        <end position="27"/>
    </location>
</feature>
<feature type="chain" id="PRO_0000003556" description="Cerebellin-4">
    <location>
        <begin position="28"/>
        <end position="201"/>
    </location>
</feature>
<feature type="domain" description="C1q" evidence="3">
    <location>
        <begin position="66"/>
        <end position="201"/>
    </location>
</feature>
<feature type="glycosylation site" description="N-linked (GlcNAc...) asparagine" evidence="4">
    <location>
        <position position="29"/>
    </location>
</feature>
<feature type="glycosylation site" description="N-linked (GlcNAc...) asparagine" evidence="4">
    <location>
        <position position="88"/>
    </location>
</feature>
<feature type="disulfide bond" description="Interchain" evidence="2">
    <location>
        <position position="40"/>
    </location>
</feature>
<feature type="disulfide bond" description="Interchain" evidence="2">
    <location>
        <position position="44"/>
    </location>
</feature>
<feature type="sequence conflict" description="In Ref. 2; BAF82329." evidence="6" ref="2">
    <original>S</original>
    <variation>P</variation>
    <location>
        <position position="191"/>
    </location>
</feature>
<organism>
    <name type="scientific">Homo sapiens</name>
    <name type="common">Human</name>
    <dbReference type="NCBI Taxonomy" id="9606"/>
    <lineage>
        <taxon>Eukaryota</taxon>
        <taxon>Metazoa</taxon>
        <taxon>Chordata</taxon>
        <taxon>Craniata</taxon>
        <taxon>Vertebrata</taxon>
        <taxon>Euteleostomi</taxon>
        <taxon>Mammalia</taxon>
        <taxon>Eutheria</taxon>
        <taxon>Euarchontoglires</taxon>
        <taxon>Primates</taxon>
        <taxon>Haplorrhini</taxon>
        <taxon>Catarrhini</taxon>
        <taxon>Hominidae</taxon>
        <taxon>Homo</taxon>
    </lineage>
</organism>
<accession>Q9NTU7</accession>
<accession>A8K0S5</accession>
<dbReference type="EMBL" id="AY358527">
    <property type="protein sequence ID" value="AAQ88891.1"/>
    <property type="molecule type" value="mRNA"/>
</dbReference>
<dbReference type="EMBL" id="AK289640">
    <property type="protein sequence ID" value="BAF82329.1"/>
    <property type="molecule type" value="mRNA"/>
</dbReference>
<dbReference type="EMBL" id="AL117383">
    <property type="status" value="NOT_ANNOTATED_CDS"/>
    <property type="molecule type" value="Genomic_DNA"/>
</dbReference>
<dbReference type="EMBL" id="BC050026">
    <property type="protein sequence ID" value="AAH50026.1"/>
    <property type="molecule type" value="mRNA"/>
</dbReference>
<dbReference type="EMBL" id="BC069402">
    <property type="protein sequence ID" value="AAH69402.1"/>
    <property type="molecule type" value="mRNA"/>
</dbReference>
<dbReference type="EMBL" id="BC069488">
    <property type="protein sequence ID" value="AAH69488.1"/>
    <property type="molecule type" value="mRNA"/>
</dbReference>
<dbReference type="EMBL" id="BC069516">
    <property type="protein sequence ID" value="AAH69516.1"/>
    <property type="molecule type" value="mRNA"/>
</dbReference>
<dbReference type="CCDS" id="CCDS13448.1"/>
<dbReference type="RefSeq" id="NP_542184.1">
    <property type="nucleotide sequence ID" value="NM_080617.6"/>
</dbReference>
<dbReference type="SMR" id="Q9NTU7"/>
<dbReference type="BioGRID" id="126652">
    <property type="interactions" value="141"/>
</dbReference>
<dbReference type="FunCoup" id="Q9NTU7">
    <property type="interactions" value="44"/>
</dbReference>
<dbReference type="IntAct" id="Q9NTU7">
    <property type="interactions" value="120"/>
</dbReference>
<dbReference type="MINT" id="Q9NTU7"/>
<dbReference type="STRING" id="9606.ENSP00000064571"/>
<dbReference type="GlyConnect" id="2027">
    <property type="glycosylation" value="2 N-Linked glycans (1 site)"/>
</dbReference>
<dbReference type="GlyCosmos" id="Q9NTU7">
    <property type="glycosylation" value="2 sites, 4 glycans"/>
</dbReference>
<dbReference type="GlyGen" id="Q9NTU7">
    <property type="glycosylation" value="2 sites, 4 N-linked glycans (1 site)"/>
</dbReference>
<dbReference type="iPTMnet" id="Q9NTU7"/>
<dbReference type="PhosphoSitePlus" id="Q9NTU7"/>
<dbReference type="BioMuta" id="CBLN4"/>
<dbReference type="DMDM" id="13626170"/>
<dbReference type="MassIVE" id="Q9NTU7"/>
<dbReference type="PaxDb" id="9606-ENSP00000064571"/>
<dbReference type="PeptideAtlas" id="Q9NTU7"/>
<dbReference type="ProteomicsDB" id="82632"/>
<dbReference type="Antibodypedia" id="28817">
    <property type="antibodies" value="111 antibodies from 27 providers"/>
</dbReference>
<dbReference type="DNASU" id="140689"/>
<dbReference type="Ensembl" id="ENST00000064571.3">
    <property type="protein sequence ID" value="ENSP00000064571.2"/>
    <property type="gene ID" value="ENSG00000054803.4"/>
</dbReference>
<dbReference type="GeneID" id="140689"/>
<dbReference type="KEGG" id="hsa:140689"/>
<dbReference type="MANE-Select" id="ENST00000064571.3">
    <property type="protein sequence ID" value="ENSP00000064571.2"/>
    <property type="RefSeq nucleotide sequence ID" value="NM_080617.6"/>
    <property type="RefSeq protein sequence ID" value="NP_542184.1"/>
</dbReference>
<dbReference type="UCSC" id="uc002xxa.5">
    <property type="organism name" value="human"/>
</dbReference>
<dbReference type="AGR" id="HGNC:16231"/>
<dbReference type="CTD" id="140689"/>
<dbReference type="DisGeNET" id="140689"/>
<dbReference type="GeneCards" id="CBLN4"/>
<dbReference type="HGNC" id="HGNC:16231">
    <property type="gene designation" value="CBLN4"/>
</dbReference>
<dbReference type="HPA" id="ENSG00000054803">
    <property type="expression patterns" value="Tissue enhanced (adrenal gland, brain, epididymis)"/>
</dbReference>
<dbReference type="MIM" id="615029">
    <property type="type" value="gene"/>
</dbReference>
<dbReference type="neXtProt" id="NX_Q9NTU7"/>
<dbReference type="OpenTargets" id="ENSG00000054803"/>
<dbReference type="PharmGKB" id="PA26120"/>
<dbReference type="VEuPathDB" id="HostDB:ENSG00000054803"/>
<dbReference type="eggNOG" id="ENOG502QV08">
    <property type="taxonomic scope" value="Eukaryota"/>
</dbReference>
<dbReference type="GeneTree" id="ENSGT00940000159728"/>
<dbReference type="HOGENOM" id="CLU_001074_8_2_1"/>
<dbReference type="InParanoid" id="Q9NTU7"/>
<dbReference type="OMA" id="PAMDWRS"/>
<dbReference type="OrthoDB" id="10070467at2759"/>
<dbReference type="PAN-GO" id="Q9NTU7">
    <property type="GO annotations" value="3 GO annotations based on evolutionary models"/>
</dbReference>
<dbReference type="PhylomeDB" id="Q9NTU7"/>
<dbReference type="TreeFam" id="TF329591"/>
<dbReference type="PathwayCommons" id="Q9NTU7"/>
<dbReference type="SignaLink" id="Q9NTU7"/>
<dbReference type="BioGRID-ORCS" id="140689">
    <property type="hits" value="12 hits in 1139 CRISPR screens"/>
</dbReference>
<dbReference type="GenomeRNAi" id="140689"/>
<dbReference type="Pharos" id="Q9NTU7">
    <property type="development level" value="Tbio"/>
</dbReference>
<dbReference type="PRO" id="PR:Q9NTU7"/>
<dbReference type="Proteomes" id="UP000005640">
    <property type="component" value="Chromosome 20"/>
</dbReference>
<dbReference type="RNAct" id="Q9NTU7">
    <property type="molecule type" value="protein"/>
</dbReference>
<dbReference type="Bgee" id="ENSG00000054803">
    <property type="expression patterns" value="Expressed in secondary oocyte and 112 other cell types or tissues"/>
</dbReference>
<dbReference type="GO" id="GO:0062023">
    <property type="term" value="C:collagen-containing extracellular matrix"/>
    <property type="evidence" value="ECO:0007005"/>
    <property type="project" value="BHF-UCL"/>
</dbReference>
<dbReference type="GO" id="GO:0005576">
    <property type="term" value="C:extracellular region"/>
    <property type="evidence" value="ECO:0000250"/>
    <property type="project" value="UniProtKB"/>
</dbReference>
<dbReference type="GO" id="GO:0005615">
    <property type="term" value="C:extracellular space"/>
    <property type="evidence" value="ECO:0007669"/>
    <property type="project" value="Ensembl"/>
</dbReference>
<dbReference type="GO" id="GO:0098982">
    <property type="term" value="C:GABA-ergic synapse"/>
    <property type="evidence" value="ECO:0000250"/>
    <property type="project" value="UniProtKB"/>
</dbReference>
<dbReference type="GO" id="GO:0098978">
    <property type="term" value="C:glutamatergic synapse"/>
    <property type="evidence" value="ECO:0007669"/>
    <property type="project" value="Ensembl"/>
</dbReference>
<dbReference type="GO" id="GO:0045202">
    <property type="term" value="C:synapse"/>
    <property type="evidence" value="ECO:0000318"/>
    <property type="project" value="GO_Central"/>
</dbReference>
<dbReference type="GO" id="GO:0043083">
    <property type="term" value="C:synaptic cleft"/>
    <property type="evidence" value="ECO:0007669"/>
    <property type="project" value="Ensembl"/>
</dbReference>
<dbReference type="GO" id="GO:1904862">
    <property type="term" value="P:inhibitory synapse assembly"/>
    <property type="evidence" value="ECO:0000250"/>
    <property type="project" value="UniProtKB"/>
</dbReference>
<dbReference type="GO" id="GO:0009306">
    <property type="term" value="P:protein secretion"/>
    <property type="evidence" value="ECO:0007669"/>
    <property type="project" value="Ensembl"/>
</dbReference>
<dbReference type="GO" id="GO:0099550">
    <property type="term" value="P:trans-synaptic signaling, modulating synaptic transmission"/>
    <property type="evidence" value="ECO:0007669"/>
    <property type="project" value="Ensembl"/>
</dbReference>
<dbReference type="FunFam" id="2.60.120.40:FF:000002">
    <property type="entry name" value="Cerebellin 4"/>
    <property type="match status" value="1"/>
</dbReference>
<dbReference type="Gene3D" id="2.60.120.40">
    <property type="match status" value="1"/>
</dbReference>
<dbReference type="InterPro" id="IPR001073">
    <property type="entry name" value="C1q_dom"/>
</dbReference>
<dbReference type="InterPro" id="IPR050822">
    <property type="entry name" value="Cerebellin_Synaptic_Org"/>
</dbReference>
<dbReference type="InterPro" id="IPR008983">
    <property type="entry name" value="Tumour_necrosis_fac-like_dom"/>
</dbReference>
<dbReference type="PANTHER" id="PTHR22923:SF3">
    <property type="entry name" value="CEREBELLIN-4"/>
    <property type="match status" value="1"/>
</dbReference>
<dbReference type="PANTHER" id="PTHR22923">
    <property type="entry name" value="CEREBELLIN-RELATED"/>
    <property type="match status" value="1"/>
</dbReference>
<dbReference type="Pfam" id="PF00386">
    <property type="entry name" value="C1q"/>
    <property type="match status" value="1"/>
</dbReference>
<dbReference type="PRINTS" id="PR00007">
    <property type="entry name" value="COMPLEMNTC1Q"/>
</dbReference>
<dbReference type="SMART" id="SM00110">
    <property type="entry name" value="C1Q"/>
    <property type="match status" value="1"/>
</dbReference>
<dbReference type="SUPFAM" id="SSF49842">
    <property type="entry name" value="TNF-like"/>
    <property type="match status" value="1"/>
</dbReference>
<dbReference type="PROSITE" id="PS50871">
    <property type="entry name" value="C1Q"/>
    <property type="match status" value="1"/>
</dbReference>
<gene>
    <name type="primary">CBLN4</name>
    <name type="synonym">CBLNL1</name>
    <name type="ORF">UNQ718/PRO1382</name>
</gene>
<comment type="function">
    <text evidence="1">Acts as a synaptic organizer in specific subsets of neurons in the brain (By similarity). Essential for the formation and maintenance of inhibitory GABAergic synapses (By similarity). Promotes the development of dendrite-targeting inhibitory GABAergic synapses made by somatostatin-positive interneurons (By similarity). May contribute to the function of ventral medial habenula region of the brain implicated in the regulation of anxiety-related behaviors (By similarity). May play a role in CBLN3 export from the endoplasmic reticulum and secretion (By similarity).</text>
</comment>
<comment type="subunit">
    <text evidence="1 2">Homohexamer; disulfide-linked homotrimers. The trimers are assembled via the globular C1q domains. The trimers associate via N-terminal cysteine residues to form disulfide-linked hexamers (By similarity). May form oligomers with CBLN1, CBLN2 and CBLN3 prior to secretion (By similarity). Strongly interacts with DCC in a NTN1-displaceable fashion (By similarity). Weakly binds to NRXN1 and NRXN2 long and short isoforms produced by alternative promoter usage. Interaction with NRXN3 short isoform is hardly detectable; no interaction at all with NRXN3 long isoform (By similarity).</text>
</comment>
<comment type="subcellular location">
    <subcellularLocation>
        <location evidence="1">Secreted</location>
    </subcellularLocation>
    <subcellularLocation>
        <location evidence="1">Synapse</location>
    </subcellularLocation>
    <text evidence="1">Detected at GABAergic synapses.</text>
</comment>
<comment type="PTM">
    <text evidence="1">Sialoglycoprotein.</text>
</comment>
<keyword id="KW-0903">Direct protein sequencing</keyword>
<keyword id="KW-1015">Disulfide bond</keyword>
<keyword id="KW-0325">Glycoprotein</keyword>
<keyword id="KW-1267">Proteomics identification</keyword>
<keyword id="KW-1185">Reference proteome</keyword>
<keyword id="KW-0964">Secreted</keyword>
<keyword id="KW-0730">Sialic acid</keyword>
<keyword id="KW-0732">Signal</keyword>
<keyword id="KW-0770">Synapse</keyword>